<organism>
    <name type="scientific">Rhizobium leguminosarum bv. trifolii (strain WSM2304)</name>
    <dbReference type="NCBI Taxonomy" id="395492"/>
    <lineage>
        <taxon>Bacteria</taxon>
        <taxon>Pseudomonadati</taxon>
        <taxon>Pseudomonadota</taxon>
        <taxon>Alphaproteobacteria</taxon>
        <taxon>Hyphomicrobiales</taxon>
        <taxon>Rhizobiaceae</taxon>
        <taxon>Rhizobium/Agrobacterium group</taxon>
        <taxon>Rhizobium</taxon>
    </lineage>
</organism>
<sequence>MRTIVVCSGGLDSVSLAHKIAAEQQLIGLVSFDYGQRHRKELDFAARCAARLAVPHHIIDISAIGGHLSGSALTDDIEVPDGHYAEETMKATVVPNRNAIMLAIAFGLAAAQKADAVAVAVHGGDHFIYPDCRPGFIDAFQRMQNEALDGYASVRLLAPYVEVSKAAIVTDGEKHATPFAETWSCYKGGRLHCGRCGTCVERREAFHLAGIPDPTEYEDQDFWKAAVSQYSAAEVR</sequence>
<keyword id="KW-0067">ATP-binding</keyword>
<keyword id="KW-0436">Ligase</keyword>
<keyword id="KW-0479">Metal-binding</keyword>
<keyword id="KW-0547">Nucleotide-binding</keyword>
<keyword id="KW-0671">Queuosine biosynthesis</keyword>
<keyword id="KW-1185">Reference proteome</keyword>
<keyword id="KW-0862">Zinc</keyword>
<evidence type="ECO:0000255" key="1">
    <source>
        <dbReference type="HAMAP-Rule" id="MF_01633"/>
    </source>
</evidence>
<comment type="function">
    <text evidence="1">Catalyzes the ATP-dependent conversion of 7-carboxy-7-deazaguanine (CDG) to 7-cyano-7-deazaguanine (preQ(0)).</text>
</comment>
<comment type="catalytic activity">
    <reaction evidence="1">
        <text>7-carboxy-7-deazaguanine + NH4(+) + ATP = 7-cyano-7-deazaguanine + ADP + phosphate + H2O + H(+)</text>
        <dbReference type="Rhea" id="RHEA:27982"/>
        <dbReference type="ChEBI" id="CHEBI:15377"/>
        <dbReference type="ChEBI" id="CHEBI:15378"/>
        <dbReference type="ChEBI" id="CHEBI:28938"/>
        <dbReference type="ChEBI" id="CHEBI:30616"/>
        <dbReference type="ChEBI" id="CHEBI:43474"/>
        <dbReference type="ChEBI" id="CHEBI:45075"/>
        <dbReference type="ChEBI" id="CHEBI:61036"/>
        <dbReference type="ChEBI" id="CHEBI:456216"/>
        <dbReference type="EC" id="6.3.4.20"/>
    </reaction>
</comment>
<comment type="cofactor">
    <cofactor evidence="1">
        <name>Zn(2+)</name>
        <dbReference type="ChEBI" id="CHEBI:29105"/>
    </cofactor>
    <text evidence="1">Binds 1 zinc ion per subunit.</text>
</comment>
<comment type="pathway">
    <text evidence="1">Purine metabolism; 7-cyano-7-deazaguanine biosynthesis.</text>
</comment>
<comment type="similarity">
    <text evidence="1">Belongs to the QueC family.</text>
</comment>
<protein>
    <recommendedName>
        <fullName evidence="1">7-cyano-7-deazaguanine synthase</fullName>
        <ecNumber evidence="1">6.3.4.20</ecNumber>
    </recommendedName>
    <alternativeName>
        <fullName evidence="1">7-cyano-7-carbaguanine synthase</fullName>
    </alternativeName>
    <alternativeName>
        <fullName evidence="1">PreQ(0) synthase</fullName>
    </alternativeName>
    <alternativeName>
        <fullName evidence="1">Queuosine biosynthesis protein QueC</fullName>
    </alternativeName>
</protein>
<dbReference type="EC" id="6.3.4.20" evidence="1"/>
<dbReference type="EMBL" id="CP001191">
    <property type="protein sequence ID" value="ACI56760.1"/>
    <property type="molecule type" value="Genomic_DNA"/>
</dbReference>
<dbReference type="RefSeq" id="WP_012559064.1">
    <property type="nucleotide sequence ID" value="NC_011369.1"/>
</dbReference>
<dbReference type="SMR" id="B5ZR38"/>
<dbReference type="STRING" id="395492.Rleg2_3493"/>
<dbReference type="KEGG" id="rlt:Rleg2_3493"/>
<dbReference type="eggNOG" id="COG0603">
    <property type="taxonomic scope" value="Bacteria"/>
</dbReference>
<dbReference type="HOGENOM" id="CLU_081854_1_0_5"/>
<dbReference type="UniPathway" id="UPA00391"/>
<dbReference type="Proteomes" id="UP000008330">
    <property type="component" value="Chromosome"/>
</dbReference>
<dbReference type="GO" id="GO:0005524">
    <property type="term" value="F:ATP binding"/>
    <property type="evidence" value="ECO:0007669"/>
    <property type="project" value="UniProtKB-UniRule"/>
</dbReference>
<dbReference type="GO" id="GO:0016879">
    <property type="term" value="F:ligase activity, forming carbon-nitrogen bonds"/>
    <property type="evidence" value="ECO:0007669"/>
    <property type="project" value="UniProtKB-UniRule"/>
</dbReference>
<dbReference type="GO" id="GO:0008270">
    <property type="term" value="F:zinc ion binding"/>
    <property type="evidence" value="ECO:0007669"/>
    <property type="project" value="UniProtKB-UniRule"/>
</dbReference>
<dbReference type="GO" id="GO:0008616">
    <property type="term" value="P:queuosine biosynthetic process"/>
    <property type="evidence" value="ECO:0007669"/>
    <property type="project" value="UniProtKB-UniRule"/>
</dbReference>
<dbReference type="CDD" id="cd01995">
    <property type="entry name" value="QueC-like"/>
    <property type="match status" value="1"/>
</dbReference>
<dbReference type="Gene3D" id="3.40.50.620">
    <property type="entry name" value="HUPs"/>
    <property type="match status" value="1"/>
</dbReference>
<dbReference type="HAMAP" id="MF_01633">
    <property type="entry name" value="QueC"/>
    <property type="match status" value="1"/>
</dbReference>
<dbReference type="InterPro" id="IPR018317">
    <property type="entry name" value="QueC"/>
</dbReference>
<dbReference type="InterPro" id="IPR014729">
    <property type="entry name" value="Rossmann-like_a/b/a_fold"/>
</dbReference>
<dbReference type="NCBIfam" id="TIGR00364">
    <property type="entry name" value="7-cyano-7-deazaguanine synthase QueC"/>
    <property type="match status" value="1"/>
</dbReference>
<dbReference type="PANTHER" id="PTHR42914">
    <property type="entry name" value="7-CYANO-7-DEAZAGUANINE SYNTHASE"/>
    <property type="match status" value="1"/>
</dbReference>
<dbReference type="PANTHER" id="PTHR42914:SF1">
    <property type="entry name" value="7-CYANO-7-DEAZAGUANINE SYNTHASE"/>
    <property type="match status" value="1"/>
</dbReference>
<dbReference type="Pfam" id="PF06508">
    <property type="entry name" value="QueC"/>
    <property type="match status" value="1"/>
</dbReference>
<dbReference type="PIRSF" id="PIRSF006293">
    <property type="entry name" value="ExsB"/>
    <property type="match status" value="1"/>
</dbReference>
<dbReference type="SUPFAM" id="SSF52402">
    <property type="entry name" value="Adenine nucleotide alpha hydrolases-like"/>
    <property type="match status" value="1"/>
</dbReference>
<name>QUEC_RHILW</name>
<reference key="1">
    <citation type="journal article" date="2010" name="Stand. Genomic Sci.">
        <title>Complete genome sequence of Rhizobium leguminosarum bv trifolii strain WSM2304, an effective microsymbiont of the South American clover Trifolium polymorphum.</title>
        <authorList>
            <person name="Reeve W."/>
            <person name="O'Hara G."/>
            <person name="Chain P."/>
            <person name="Ardley J."/>
            <person name="Brau L."/>
            <person name="Nandesena K."/>
            <person name="Tiwari R."/>
            <person name="Malfatti S."/>
            <person name="Kiss H."/>
            <person name="Lapidus A."/>
            <person name="Copeland A."/>
            <person name="Nolan M."/>
            <person name="Land M."/>
            <person name="Ivanova N."/>
            <person name="Mavromatis K."/>
            <person name="Markowitz V."/>
            <person name="Kyrpides N."/>
            <person name="Melino V."/>
            <person name="Denton M."/>
            <person name="Yates R."/>
            <person name="Howieson J."/>
        </authorList>
    </citation>
    <scope>NUCLEOTIDE SEQUENCE [LARGE SCALE GENOMIC DNA]</scope>
    <source>
        <strain>WSM2304</strain>
    </source>
</reference>
<gene>
    <name evidence="1" type="primary">queC</name>
    <name type="ordered locus">Rleg2_3493</name>
</gene>
<feature type="chain" id="PRO_1000186625" description="7-cyano-7-deazaguanine synthase">
    <location>
        <begin position="1"/>
        <end position="236"/>
    </location>
</feature>
<feature type="binding site" evidence="1">
    <location>
        <begin position="7"/>
        <end position="17"/>
    </location>
    <ligand>
        <name>ATP</name>
        <dbReference type="ChEBI" id="CHEBI:30616"/>
    </ligand>
</feature>
<feature type="binding site" evidence="1">
    <location>
        <position position="185"/>
    </location>
    <ligand>
        <name>Zn(2+)</name>
        <dbReference type="ChEBI" id="CHEBI:29105"/>
    </ligand>
</feature>
<feature type="binding site" evidence="1">
    <location>
        <position position="193"/>
    </location>
    <ligand>
        <name>Zn(2+)</name>
        <dbReference type="ChEBI" id="CHEBI:29105"/>
    </ligand>
</feature>
<feature type="binding site" evidence="1">
    <location>
        <position position="196"/>
    </location>
    <ligand>
        <name>Zn(2+)</name>
        <dbReference type="ChEBI" id="CHEBI:29105"/>
    </ligand>
</feature>
<feature type="binding site" evidence="1">
    <location>
        <position position="199"/>
    </location>
    <ligand>
        <name>Zn(2+)</name>
        <dbReference type="ChEBI" id="CHEBI:29105"/>
    </ligand>
</feature>
<proteinExistence type="inferred from homology"/>
<accession>B5ZR38</accession>